<proteinExistence type="inferred from homology"/>
<organism>
    <name type="scientific">Pseudomonas putida (strain W619)</name>
    <dbReference type="NCBI Taxonomy" id="390235"/>
    <lineage>
        <taxon>Bacteria</taxon>
        <taxon>Pseudomonadati</taxon>
        <taxon>Pseudomonadota</taxon>
        <taxon>Gammaproteobacteria</taxon>
        <taxon>Pseudomonadales</taxon>
        <taxon>Pseudomonadaceae</taxon>
        <taxon>Pseudomonas</taxon>
    </lineage>
</organism>
<gene>
    <name evidence="1" type="primary">rimO</name>
    <name type="ordered locus">PputW619_4016</name>
</gene>
<dbReference type="EC" id="2.8.4.4" evidence="1"/>
<dbReference type="EMBL" id="CP000949">
    <property type="protein sequence ID" value="ACA74496.1"/>
    <property type="molecule type" value="Genomic_DNA"/>
</dbReference>
<dbReference type="SMR" id="B1JD88"/>
<dbReference type="STRING" id="390235.PputW619_4016"/>
<dbReference type="KEGG" id="ppw:PputW619_4016"/>
<dbReference type="eggNOG" id="COG0621">
    <property type="taxonomic scope" value="Bacteria"/>
</dbReference>
<dbReference type="HOGENOM" id="CLU_018697_0_0_6"/>
<dbReference type="OrthoDB" id="9805215at2"/>
<dbReference type="GO" id="GO:0005829">
    <property type="term" value="C:cytosol"/>
    <property type="evidence" value="ECO:0007669"/>
    <property type="project" value="TreeGrafter"/>
</dbReference>
<dbReference type="GO" id="GO:0051539">
    <property type="term" value="F:4 iron, 4 sulfur cluster binding"/>
    <property type="evidence" value="ECO:0007669"/>
    <property type="project" value="UniProtKB-UniRule"/>
</dbReference>
<dbReference type="GO" id="GO:0035599">
    <property type="term" value="F:aspartic acid methylthiotransferase activity"/>
    <property type="evidence" value="ECO:0007669"/>
    <property type="project" value="TreeGrafter"/>
</dbReference>
<dbReference type="GO" id="GO:0046872">
    <property type="term" value="F:metal ion binding"/>
    <property type="evidence" value="ECO:0007669"/>
    <property type="project" value="UniProtKB-KW"/>
</dbReference>
<dbReference type="GO" id="GO:0103039">
    <property type="term" value="F:protein methylthiotransferase activity"/>
    <property type="evidence" value="ECO:0007669"/>
    <property type="project" value="UniProtKB-EC"/>
</dbReference>
<dbReference type="GO" id="GO:0006400">
    <property type="term" value="P:tRNA modification"/>
    <property type="evidence" value="ECO:0007669"/>
    <property type="project" value="InterPro"/>
</dbReference>
<dbReference type="CDD" id="cd01335">
    <property type="entry name" value="Radical_SAM"/>
    <property type="match status" value="1"/>
</dbReference>
<dbReference type="FunFam" id="2.40.50.140:FF:000060">
    <property type="entry name" value="Ribosomal protein S12 methylthiotransferase RimO"/>
    <property type="match status" value="1"/>
</dbReference>
<dbReference type="FunFam" id="3.40.50.12160:FF:000002">
    <property type="entry name" value="Ribosomal protein S12 methylthiotransferase RimO"/>
    <property type="match status" value="1"/>
</dbReference>
<dbReference type="FunFam" id="3.80.30.20:FF:000001">
    <property type="entry name" value="tRNA-2-methylthio-N(6)-dimethylallyladenosine synthase 2"/>
    <property type="match status" value="1"/>
</dbReference>
<dbReference type="Gene3D" id="3.40.50.12160">
    <property type="entry name" value="Methylthiotransferase, N-terminal domain"/>
    <property type="match status" value="1"/>
</dbReference>
<dbReference type="Gene3D" id="2.40.50.140">
    <property type="entry name" value="Nucleic acid-binding proteins"/>
    <property type="match status" value="1"/>
</dbReference>
<dbReference type="Gene3D" id="3.80.30.20">
    <property type="entry name" value="tm_1862 like domain"/>
    <property type="match status" value="1"/>
</dbReference>
<dbReference type="HAMAP" id="MF_01865">
    <property type="entry name" value="MTTase_RimO"/>
    <property type="match status" value="1"/>
</dbReference>
<dbReference type="InterPro" id="IPR006638">
    <property type="entry name" value="Elp3/MiaA/NifB-like_rSAM"/>
</dbReference>
<dbReference type="InterPro" id="IPR005839">
    <property type="entry name" value="Methylthiotransferase"/>
</dbReference>
<dbReference type="InterPro" id="IPR020612">
    <property type="entry name" value="Methylthiotransferase_CS"/>
</dbReference>
<dbReference type="InterPro" id="IPR013848">
    <property type="entry name" value="Methylthiotransferase_N"/>
</dbReference>
<dbReference type="InterPro" id="IPR038135">
    <property type="entry name" value="Methylthiotransferase_N_sf"/>
</dbReference>
<dbReference type="InterPro" id="IPR012340">
    <property type="entry name" value="NA-bd_OB-fold"/>
</dbReference>
<dbReference type="InterPro" id="IPR005840">
    <property type="entry name" value="Ribosomal_uS12_MeSTrfase_RimO"/>
</dbReference>
<dbReference type="InterPro" id="IPR007197">
    <property type="entry name" value="rSAM"/>
</dbReference>
<dbReference type="InterPro" id="IPR023404">
    <property type="entry name" value="rSAM_horseshoe"/>
</dbReference>
<dbReference type="InterPro" id="IPR002792">
    <property type="entry name" value="TRAM_dom"/>
</dbReference>
<dbReference type="NCBIfam" id="TIGR01125">
    <property type="entry name" value="30S ribosomal protein S12 methylthiotransferase RimO"/>
    <property type="match status" value="1"/>
</dbReference>
<dbReference type="NCBIfam" id="TIGR00089">
    <property type="entry name" value="MiaB/RimO family radical SAM methylthiotransferase"/>
    <property type="match status" value="1"/>
</dbReference>
<dbReference type="PANTHER" id="PTHR43837">
    <property type="entry name" value="RIBOSOMAL PROTEIN S12 METHYLTHIOTRANSFERASE RIMO"/>
    <property type="match status" value="1"/>
</dbReference>
<dbReference type="PANTHER" id="PTHR43837:SF1">
    <property type="entry name" value="RIBOSOMAL PROTEIN US12 METHYLTHIOTRANSFERASE RIMO"/>
    <property type="match status" value="1"/>
</dbReference>
<dbReference type="Pfam" id="PF04055">
    <property type="entry name" value="Radical_SAM"/>
    <property type="match status" value="1"/>
</dbReference>
<dbReference type="Pfam" id="PF18693">
    <property type="entry name" value="TRAM_2"/>
    <property type="match status" value="1"/>
</dbReference>
<dbReference type="Pfam" id="PF00919">
    <property type="entry name" value="UPF0004"/>
    <property type="match status" value="1"/>
</dbReference>
<dbReference type="SFLD" id="SFLDG01082">
    <property type="entry name" value="B12-binding_domain_containing"/>
    <property type="match status" value="1"/>
</dbReference>
<dbReference type="SFLD" id="SFLDG01061">
    <property type="entry name" value="methylthiotransferase"/>
    <property type="match status" value="1"/>
</dbReference>
<dbReference type="SFLD" id="SFLDF00274">
    <property type="entry name" value="ribosomal_protein_S12_methylth"/>
    <property type="match status" value="1"/>
</dbReference>
<dbReference type="SMART" id="SM00729">
    <property type="entry name" value="Elp3"/>
    <property type="match status" value="1"/>
</dbReference>
<dbReference type="SUPFAM" id="SSF102114">
    <property type="entry name" value="Radical SAM enzymes"/>
    <property type="match status" value="1"/>
</dbReference>
<dbReference type="PROSITE" id="PS51449">
    <property type="entry name" value="MTTASE_N"/>
    <property type="match status" value="1"/>
</dbReference>
<dbReference type="PROSITE" id="PS01278">
    <property type="entry name" value="MTTASE_RADICAL"/>
    <property type="match status" value="1"/>
</dbReference>
<dbReference type="PROSITE" id="PS51918">
    <property type="entry name" value="RADICAL_SAM"/>
    <property type="match status" value="1"/>
</dbReference>
<dbReference type="PROSITE" id="PS50926">
    <property type="entry name" value="TRAM"/>
    <property type="match status" value="1"/>
</dbReference>
<keyword id="KW-0004">4Fe-4S</keyword>
<keyword id="KW-0963">Cytoplasm</keyword>
<keyword id="KW-0408">Iron</keyword>
<keyword id="KW-0411">Iron-sulfur</keyword>
<keyword id="KW-0479">Metal-binding</keyword>
<keyword id="KW-0949">S-adenosyl-L-methionine</keyword>
<keyword id="KW-0808">Transferase</keyword>
<reference key="1">
    <citation type="submission" date="2008-02" db="EMBL/GenBank/DDBJ databases">
        <title>Complete sequence of Pseudomonas putida W619.</title>
        <authorList>
            <person name="Copeland A."/>
            <person name="Lucas S."/>
            <person name="Lapidus A."/>
            <person name="Barry K."/>
            <person name="Detter J.C."/>
            <person name="Glavina del Rio T."/>
            <person name="Dalin E."/>
            <person name="Tice H."/>
            <person name="Pitluck S."/>
            <person name="Chain P."/>
            <person name="Malfatti S."/>
            <person name="Shin M."/>
            <person name="Vergez L."/>
            <person name="Schmutz J."/>
            <person name="Larimer F."/>
            <person name="Land M."/>
            <person name="Hauser L."/>
            <person name="Kyrpides N."/>
            <person name="Kim E."/>
            <person name="Taghavi S."/>
            <person name="Vangronsveld D."/>
            <person name="van der Lelie D."/>
            <person name="Richardson P."/>
        </authorList>
    </citation>
    <scope>NUCLEOTIDE SEQUENCE [LARGE SCALE GENOMIC DNA]</scope>
    <source>
        <strain>W619</strain>
    </source>
</reference>
<name>RIMO_PSEPW</name>
<comment type="function">
    <text evidence="1">Catalyzes the methylthiolation of an aspartic acid residue of ribosomal protein uS12.</text>
</comment>
<comment type="catalytic activity">
    <reaction evidence="1">
        <text>L-aspartate(89)-[ribosomal protein uS12]-hydrogen + (sulfur carrier)-SH + AH2 + 2 S-adenosyl-L-methionine = 3-methylsulfanyl-L-aspartate(89)-[ribosomal protein uS12]-hydrogen + (sulfur carrier)-H + 5'-deoxyadenosine + L-methionine + A + S-adenosyl-L-homocysteine + 2 H(+)</text>
        <dbReference type="Rhea" id="RHEA:37087"/>
        <dbReference type="Rhea" id="RHEA-COMP:10460"/>
        <dbReference type="Rhea" id="RHEA-COMP:10461"/>
        <dbReference type="Rhea" id="RHEA-COMP:14737"/>
        <dbReference type="Rhea" id="RHEA-COMP:14739"/>
        <dbReference type="ChEBI" id="CHEBI:13193"/>
        <dbReference type="ChEBI" id="CHEBI:15378"/>
        <dbReference type="ChEBI" id="CHEBI:17319"/>
        <dbReference type="ChEBI" id="CHEBI:17499"/>
        <dbReference type="ChEBI" id="CHEBI:29917"/>
        <dbReference type="ChEBI" id="CHEBI:29961"/>
        <dbReference type="ChEBI" id="CHEBI:57844"/>
        <dbReference type="ChEBI" id="CHEBI:57856"/>
        <dbReference type="ChEBI" id="CHEBI:59789"/>
        <dbReference type="ChEBI" id="CHEBI:64428"/>
        <dbReference type="ChEBI" id="CHEBI:73599"/>
        <dbReference type="EC" id="2.8.4.4"/>
    </reaction>
</comment>
<comment type="cofactor">
    <cofactor evidence="1">
        <name>[4Fe-4S] cluster</name>
        <dbReference type="ChEBI" id="CHEBI:49883"/>
    </cofactor>
    <text evidence="1">Binds 2 [4Fe-4S] clusters. One cluster is coordinated with 3 cysteines and an exchangeable S-adenosyl-L-methionine.</text>
</comment>
<comment type="subcellular location">
    <subcellularLocation>
        <location evidence="1">Cytoplasm</location>
    </subcellularLocation>
</comment>
<comment type="similarity">
    <text evidence="1">Belongs to the methylthiotransferase family. RimO subfamily.</text>
</comment>
<protein>
    <recommendedName>
        <fullName evidence="1">Ribosomal protein uS12 methylthiotransferase RimO</fullName>
        <shortName evidence="1">uS12 MTTase</shortName>
        <shortName evidence="1">uS12 methylthiotransferase</shortName>
        <ecNumber evidence="1">2.8.4.4</ecNumber>
    </recommendedName>
    <alternativeName>
        <fullName evidence="1">Ribosomal protein uS12 (aspartate-C(3))-methylthiotransferase</fullName>
    </alternativeName>
    <alternativeName>
        <fullName evidence="1">Ribosome maturation factor RimO</fullName>
    </alternativeName>
</protein>
<accession>B1JD88</accession>
<evidence type="ECO:0000255" key="1">
    <source>
        <dbReference type="HAMAP-Rule" id="MF_01865"/>
    </source>
</evidence>
<evidence type="ECO:0000255" key="2">
    <source>
        <dbReference type="PROSITE-ProRule" id="PRU01266"/>
    </source>
</evidence>
<sequence>MSTTPATPKVGFVSLGCPKALVDSERILTQLRMEGYEVVPTYEDADVVVVNTCGFIDSAKAESLEVIGEAIKENGKVIVTGCMGVEEGSIRDVHPSVLSVTGPQQYEQVVNAVHEVVPPRQDHNPLIDLVPPQGVKLTPRHYAYLKISEGCNHSCSFCIIPSMRGKLVSRPVGEVLSEAERLVKAGVKEILVISQDTSAYGVDVKYKTDFWNGRPVKTRMLELCEALSSLGAWVRLHYVYPYPNVDDVIPLMAAGKILPYLDIPFQHASPKVLKSMKRPAFEDRTLARIKNWREQCPELVIRSTFIVGFPGETEEDFQYLLDWLTEAQLDRVGCFQYSPVEGAPANDLGLEEVPDDVKQERWDRFMAHQQAISSARLQLRIGKEIEVLIDEVEEQGSVGRSFFDAPEIDGSVFIDGDHGLKPGDKVRCRVVDADEYDMWAEPV</sequence>
<feature type="chain" id="PRO_0000374951" description="Ribosomal protein uS12 methylthiotransferase RimO">
    <location>
        <begin position="1"/>
        <end position="443"/>
    </location>
</feature>
<feature type="domain" description="MTTase N-terminal" evidence="1">
    <location>
        <begin position="8"/>
        <end position="118"/>
    </location>
</feature>
<feature type="domain" description="Radical SAM core" evidence="2">
    <location>
        <begin position="137"/>
        <end position="376"/>
    </location>
</feature>
<feature type="domain" description="TRAM" evidence="1">
    <location>
        <begin position="378"/>
        <end position="443"/>
    </location>
</feature>
<feature type="binding site" evidence="1">
    <location>
        <position position="17"/>
    </location>
    <ligand>
        <name>[4Fe-4S] cluster</name>
        <dbReference type="ChEBI" id="CHEBI:49883"/>
        <label>1</label>
    </ligand>
</feature>
<feature type="binding site" evidence="1">
    <location>
        <position position="53"/>
    </location>
    <ligand>
        <name>[4Fe-4S] cluster</name>
        <dbReference type="ChEBI" id="CHEBI:49883"/>
        <label>1</label>
    </ligand>
</feature>
<feature type="binding site" evidence="1">
    <location>
        <position position="82"/>
    </location>
    <ligand>
        <name>[4Fe-4S] cluster</name>
        <dbReference type="ChEBI" id="CHEBI:49883"/>
        <label>1</label>
    </ligand>
</feature>
<feature type="binding site" evidence="1">
    <location>
        <position position="151"/>
    </location>
    <ligand>
        <name>[4Fe-4S] cluster</name>
        <dbReference type="ChEBI" id="CHEBI:49883"/>
        <label>2</label>
        <note>4Fe-4S-S-AdoMet</note>
    </ligand>
</feature>
<feature type="binding site" evidence="1">
    <location>
        <position position="155"/>
    </location>
    <ligand>
        <name>[4Fe-4S] cluster</name>
        <dbReference type="ChEBI" id="CHEBI:49883"/>
        <label>2</label>
        <note>4Fe-4S-S-AdoMet</note>
    </ligand>
</feature>
<feature type="binding site" evidence="1">
    <location>
        <position position="158"/>
    </location>
    <ligand>
        <name>[4Fe-4S] cluster</name>
        <dbReference type="ChEBI" id="CHEBI:49883"/>
        <label>2</label>
        <note>4Fe-4S-S-AdoMet</note>
    </ligand>
</feature>